<evidence type="ECO:0000255" key="1">
    <source>
        <dbReference type="HAMAP-Rule" id="MF_03051"/>
    </source>
</evidence>
<evidence type="ECO:0000256" key="2">
    <source>
        <dbReference type="SAM" id="MobiDB-lite"/>
    </source>
</evidence>
<protein>
    <recommendedName>
        <fullName evidence="1">Molybdopterin synthase sulfur carrier subunit</fullName>
    </recommendedName>
    <alternativeName>
        <fullName evidence="1">Molybdenum cofactor synthesis protein 2 small subunit</fullName>
    </alternativeName>
    <alternativeName>
        <fullName evidence="1">Molybdenum cofactor synthesis protein 2A</fullName>
        <shortName evidence="1">MOCS2A</shortName>
    </alternativeName>
    <alternativeName>
        <fullName evidence="1">Sulfur carrier protein MOCS2A</fullName>
    </alternativeName>
</protein>
<reference key="1">
    <citation type="journal article" date="2005" name="Nature">
        <title>The map-based sequence of the rice genome.</title>
        <authorList>
            <consortium name="International rice genome sequencing project (IRGSP)"/>
        </authorList>
    </citation>
    <scope>NUCLEOTIDE SEQUENCE [LARGE SCALE GENOMIC DNA]</scope>
    <source>
        <strain>cv. Nipponbare</strain>
    </source>
</reference>
<reference key="2">
    <citation type="journal article" date="2008" name="Nucleic Acids Res.">
        <title>The rice annotation project database (RAP-DB): 2008 update.</title>
        <authorList>
            <consortium name="The rice annotation project (RAP)"/>
        </authorList>
    </citation>
    <scope>GENOME REANNOTATION</scope>
    <source>
        <strain>cv. Nipponbare</strain>
    </source>
</reference>
<reference key="3">
    <citation type="journal article" date="2013" name="Rice">
        <title>Improvement of the Oryza sativa Nipponbare reference genome using next generation sequence and optical map data.</title>
        <authorList>
            <person name="Kawahara Y."/>
            <person name="de la Bastide M."/>
            <person name="Hamilton J.P."/>
            <person name="Kanamori H."/>
            <person name="McCombie W.R."/>
            <person name="Ouyang S."/>
            <person name="Schwartz D.C."/>
            <person name="Tanaka T."/>
            <person name="Wu J."/>
            <person name="Zhou S."/>
            <person name="Childs K.L."/>
            <person name="Davidson R.M."/>
            <person name="Lin H."/>
            <person name="Quesada-Ocampo L."/>
            <person name="Vaillancourt B."/>
            <person name="Sakai H."/>
            <person name="Lee S.S."/>
            <person name="Kim J."/>
            <person name="Numa H."/>
            <person name="Itoh T."/>
            <person name="Buell C.R."/>
            <person name="Matsumoto T."/>
        </authorList>
    </citation>
    <scope>GENOME REANNOTATION</scope>
    <source>
        <strain>cv. Nipponbare</strain>
    </source>
</reference>
<reference key="4">
    <citation type="journal article" date="2005" name="PLoS Biol.">
        <title>The genomes of Oryza sativa: a history of duplications.</title>
        <authorList>
            <person name="Yu J."/>
            <person name="Wang J."/>
            <person name="Lin W."/>
            <person name="Li S."/>
            <person name="Li H."/>
            <person name="Zhou J."/>
            <person name="Ni P."/>
            <person name="Dong W."/>
            <person name="Hu S."/>
            <person name="Zeng C."/>
            <person name="Zhang J."/>
            <person name="Zhang Y."/>
            <person name="Li R."/>
            <person name="Xu Z."/>
            <person name="Li S."/>
            <person name="Li X."/>
            <person name="Zheng H."/>
            <person name="Cong L."/>
            <person name="Lin L."/>
            <person name="Yin J."/>
            <person name="Geng J."/>
            <person name="Li G."/>
            <person name="Shi J."/>
            <person name="Liu J."/>
            <person name="Lv H."/>
            <person name="Li J."/>
            <person name="Wang J."/>
            <person name="Deng Y."/>
            <person name="Ran L."/>
            <person name="Shi X."/>
            <person name="Wang X."/>
            <person name="Wu Q."/>
            <person name="Li C."/>
            <person name="Ren X."/>
            <person name="Wang J."/>
            <person name="Wang X."/>
            <person name="Li D."/>
            <person name="Liu D."/>
            <person name="Zhang X."/>
            <person name="Ji Z."/>
            <person name="Zhao W."/>
            <person name="Sun Y."/>
            <person name="Zhang Z."/>
            <person name="Bao J."/>
            <person name="Han Y."/>
            <person name="Dong L."/>
            <person name="Ji J."/>
            <person name="Chen P."/>
            <person name="Wu S."/>
            <person name="Liu J."/>
            <person name="Xiao Y."/>
            <person name="Bu D."/>
            <person name="Tan J."/>
            <person name="Yang L."/>
            <person name="Ye C."/>
            <person name="Zhang J."/>
            <person name="Xu J."/>
            <person name="Zhou Y."/>
            <person name="Yu Y."/>
            <person name="Zhang B."/>
            <person name="Zhuang S."/>
            <person name="Wei H."/>
            <person name="Liu B."/>
            <person name="Lei M."/>
            <person name="Yu H."/>
            <person name="Li Y."/>
            <person name="Xu H."/>
            <person name="Wei S."/>
            <person name="He X."/>
            <person name="Fang L."/>
            <person name="Zhang Z."/>
            <person name="Zhang Y."/>
            <person name="Huang X."/>
            <person name="Su Z."/>
            <person name="Tong W."/>
            <person name="Li J."/>
            <person name="Tong Z."/>
            <person name="Li S."/>
            <person name="Ye J."/>
            <person name="Wang L."/>
            <person name="Fang L."/>
            <person name="Lei T."/>
            <person name="Chen C.-S."/>
            <person name="Chen H.-C."/>
            <person name="Xu Z."/>
            <person name="Li H."/>
            <person name="Huang H."/>
            <person name="Zhang F."/>
            <person name="Xu H."/>
            <person name="Li N."/>
            <person name="Zhao C."/>
            <person name="Li S."/>
            <person name="Dong L."/>
            <person name="Huang Y."/>
            <person name="Li L."/>
            <person name="Xi Y."/>
            <person name="Qi Q."/>
            <person name="Li W."/>
            <person name="Zhang B."/>
            <person name="Hu W."/>
            <person name="Zhang Y."/>
            <person name="Tian X."/>
            <person name="Jiao Y."/>
            <person name="Liang X."/>
            <person name="Jin J."/>
            <person name="Gao L."/>
            <person name="Zheng W."/>
            <person name="Hao B."/>
            <person name="Liu S.-M."/>
            <person name="Wang W."/>
            <person name="Yuan L."/>
            <person name="Cao M."/>
            <person name="McDermott J."/>
            <person name="Samudrala R."/>
            <person name="Wang J."/>
            <person name="Wong G.K.-S."/>
            <person name="Yang H."/>
        </authorList>
    </citation>
    <scope>NUCLEOTIDE SEQUENCE [LARGE SCALE GENOMIC DNA]</scope>
    <source>
        <strain>cv. Nipponbare</strain>
    </source>
</reference>
<reference key="5">
    <citation type="submission" date="2006-10" db="EMBL/GenBank/DDBJ databases">
        <title>Oryza sativa full length cDNA.</title>
        <authorList>
            <consortium name="The rice full-length cDNA consortium"/>
        </authorList>
    </citation>
    <scope>NUCLEOTIDE SEQUENCE [LARGE SCALE MRNA]</scope>
    <source>
        <strain>cv. Nipponbare</strain>
    </source>
</reference>
<sequence>MALDPKANHAAAAAASADNPTAAAAKAKVKVKVLFFARARDLTGVTEAPVEVPAGSTAGDCLARVLAAFPRLEEIRRSMVLALNEEYAPEDAAVGDGDELAIIPPISGG</sequence>
<proteinExistence type="inferred from homology"/>
<name>MOC2A_ORYSJ</name>
<gene>
    <name type="ordered locus">Os02g0558300</name>
    <name type="ordered locus">LOC_Os02g35200</name>
    <name type="ORF">OsJ_006938</name>
    <name type="ORF">OSJNBb0038F20.16</name>
</gene>
<keyword id="KW-0963">Cytoplasm</keyword>
<keyword id="KW-0501">Molybdenum cofactor biosynthesis</keyword>
<keyword id="KW-0547">Nucleotide-binding</keyword>
<keyword id="KW-0597">Phosphoprotein</keyword>
<keyword id="KW-1185">Reference proteome</keyword>
<comment type="function">
    <text evidence="1">Acts as a sulfur carrier required for molybdopterin biosynthesis. Component of the molybdopterin synthase complex that catalyzes the conversion of precursor Z into molybdopterin by mediating the incorporation of 2 sulfur atoms into precursor Z to generate a dithiolene group. In the complex, serves as sulfur donor by being thiocarboxylated (-COSH) at its C-terminus by MOCS3. After interaction with MOCS2B, the sulfur is then transferred to precursor Z to form molybdopterin.</text>
</comment>
<comment type="pathway">
    <text evidence="1">Cofactor biosynthesis; molybdopterin biosynthesis.</text>
</comment>
<comment type="subunit">
    <text evidence="1">Heterotetramer; composed of 2 small (MOCS2A) and 2 large (MOCS2B) subunits.</text>
</comment>
<comment type="subcellular location">
    <subcellularLocation>
        <location evidence="1">Cytoplasm</location>
    </subcellularLocation>
</comment>
<comment type="PTM">
    <text evidence="1">C-terminal thiocarboxylation occurs in 2 steps, it is first acyl-adenylated (-COAMP) via the hesA/moeB/thiF part of MOCS3, then thiocarboxylated (-COSH) via the rhodanese domain of MOCS3.</text>
</comment>
<comment type="similarity">
    <text evidence="1">Belongs to the MoaD family. MOCS2A subfamily.</text>
</comment>
<organism>
    <name type="scientific">Oryza sativa subsp. japonica</name>
    <name type="common">Rice</name>
    <dbReference type="NCBI Taxonomy" id="39947"/>
    <lineage>
        <taxon>Eukaryota</taxon>
        <taxon>Viridiplantae</taxon>
        <taxon>Streptophyta</taxon>
        <taxon>Embryophyta</taxon>
        <taxon>Tracheophyta</taxon>
        <taxon>Spermatophyta</taxon>
        <taxon>Magnoliopsida</taxon>
        <taxon>Liliopsida</taxon>
        <taxon>Poales</taxon>
        <taxon>Poaceae</taxon>
        <taxon>BOP clade</taxon>
        <taxon>Oryzoideae</taxon>
        <taxon>Oryzeae</taxon>
        <taxon>Oryzinae</taxon>
        <taxon>Oryza</taxon>
        <taxon>Oryza sativa</taxon>
    </lineage>
</organism>
<feature type="chain" id="PRO_0000369319" description="Molybdopterin synthase sulfur carrier subunit">
    <location>
        <begin position="1"/>
        <end position="109"/>
    </location>
</feature>
<feature type="region of interest" description="Disordered" evidence="2">
    <location>
        <begin position="1"/>
        <end position="21"/>
    </location>
</feature>
<feature type="modified residue" description="1-thioglycine; alternate" evidence="1">
    <location>
        <position position="109"/>
    </location>
</feature>
<feature type="modified residue" description="Glycyl adenylate; alternate" evidence="1">
    <location>
        <position position="109"/>
    </location>
</feature>
<dbReference type="EMBL" id="AP005808">
    <property type="protein sequence ID" value="BAD16426.1"/>
    <property type="molecule type" value="Genomic_DNA"/>
</dbReference>
<dbReference type="EMBL" id="AP008208">
    <property type="protein sequence ID" value="BAF09058.1"/>
    <property type="molecule type" value="Genomic_DNA"/>
</dbReference>
<dbReference type="EMBL" id="AP014958">
    <property type="status" value="NOT_ANNOTATED_CDS"/>
    <property type="molecule type" value="Genomic_DNA"/>
</dbReference>
<dbReference type="EMBL" id="CM000139">
    <property type="protein sequence ID" value="EAZ23455.1"/>
    <property type="molecule type" value="Genomic_DNA"/>
</dbReference>
<dbReference type="EMBL" id="AK243084">
    <property type="protein sequence ID" value="BAH01443.1"/>
    <property type="molecule type" value="mRNA"/>
</dbReference>
<dbReference type="RefSeq" id="XP_015626171.1">
    <property type="nucleotide sequence ID" value="XM_015770685.1"/>
</dbReference>
<dbReference type="SMR" id="Q6YVX4"/>
<dbReference type="FunCoup" id="Q6YVX4">
    <property type="interactions" value="29"/>
</dbReference>
<dbReference type="STRING" id="39947.Q6YVX4"/>
<dbReference type="PaxDb" id="39947-Q6YVX4"/>
<dbReference type="KEGG" id="dosa:Os02g0558300"/>
<dbReference type="eggNOG" id="KOG3474">
    <property type="taxonomic scope" value="Eukaryota"/>
</dbReference>
<dbReference type="HOGENOM" id="CLU_114601_4_3_1"/>
<dbReference type="InParanoid" id="Q6YVX4"/>
<dbReference type="OrthoDB" id="5531344at2759"/>
<dbReference type="UniPathway" id="UPA00344"/>
<dbReference type="Proteomes" id="UP000000763">
    <property type="component" value="Chromosome 2"/>
</dbReference>
<dbReference type="Proteomes" id="UP000007752">
    <property type="component" value="Chromosome 2"/>
</dbReference>
<dbReference type="Proteomes" id="UP000059680">
    <property type="component" value="Chromosome 2"/>
</dbReference>
<dbReference type="GO" id="GO:1990133">
    <property type="term" value="C:molybdopterin adenylyltransferase complex"/>
    <property type="evidence" value="ECO:0000318"/>
    <property type="project" value="GO_Central"/>
</dbReference>
<dbReference type="GO" id="GO:1990140">
    <property type="term" value="C:molybdopterin synthase complex"/>
    <property type="evidence" value="ECO:0000250"/>
    <property type="project" value="UniProtKB"/>
</dbReference>
<dbReference type="GO" id="GO:0030366">
    <property type="term" value="F:molybdopterin synthase activity"/>
    <property type="evidence" value="ECO:0007669"/>
    <property type="project" value="UniProtKB-UniRule"/>
</dbReference>
<dbReference type="GO" id="GO:0000166">
    <property type="term" value="F:nucleotide binding"/>
    <property type="evidence" value="ECO:0007669"/>
    <property type="project" value="UniProtKB-KW"/>
</dbReference>
<dbReference type="GO" id="GO:0006777">
    <property type="term" value="P:Mo-molybdopterin cofactor biosynthetic process"/>
    <property type="evidence" value="ECO:0000250"/>
    <property type="project" value="UniProtKB"/>
</dbReference>
<dbReference type="CDD" id="cd00754">
    <property type="entry name" value="Ubl_MoaD"/>
    <property type="match status" value="1"/>
</dbReference>
<dbReference type="FunFam" id="3.10.20.30:FF:000010">
    <property type="entry name" value="Molybdopterin synthase sulfur carrier subunit"/>
    <property type="match status" value="1"/>
</dbReference>
<dbReference type="Gene3D" id="3.10.20.30">
    <property type="match status" value="1"/>
</dbReference>
<dbReference type="HAMAP" id="MF_03051">
    <property type="entry name" value="MOCS2A"/>
    <property type="match status" value="1"/>
</dbReference>
<dbReference type="InterPro" id="IPR012675">
    <property type="entry name" value="Beta-grasp_dom_sf"/>
</dbReference>
<dbReference type="InterPro" id="IPR044672">
    <property type="entry name" value="MOCS2A"/>
</dbReference>
<dbReference type="InterPro" id="IPR028887">
    <property type="entry name" value="MOCS2A_euk"/>
</dbReference>
<dbReference type="InterPro" id="IPR016155">
    <property type="entry name" value="Mopterin_synth/thiamin_S_b"/>
</dbReference>
<dbReference type="InterPro" id="IPR003749">
    <property type="entry name" value="ThiS/MoaD-like"/>
</dbReference>
<dbReference type="NCBIfam" id="TIGR01682">
    <property type="entry name" value="moaD"/>
    <property type="match status" value="1"/>
</dbReference>
<dbReference type="PANTHER" id="PTHR33359">
    <property type="entry name" value="MOLYBDOPTERIN SYNTHASE SULFUR CARRIER SUBUNIT"/>
    <property type="match status" value="1"/>
</dbReference>
<dbReference type="PANTHER" id="PTHR33359:SF1">
    <property type="entry name" value="MOLYBDOPTERIN SYNTHASE SULFUR CARRIER SUBUNIT"/>
    <property type="match status" value="1"/>
</dbReference>
<dbReference type="Pfam" id="PF02597">
    <property type="entry name" value="ThiS"/>
    <property type="match status" value="1"/>
</dbReference>
<dbReference type="SUPFAM" id="SSF54285">
    <property type="entry name" value="MoaD/ThiS"/>
    <property type="match status" value="1"/>
</dbReference>
<accession>Q6YVX4</accession>